<sequence length="664" mass="76599">MTAQSNITPESIVGDLRYLQLLSRSFPTIADASTEIINLEAILNLPKGTEHFLTDIHGEYEAFQHVLKNASGAVKRKVNEIFGNTLREAEKKELCTLIYYPEEKIQLVKAREKDLDDWYLITLNQLVKVCQNVSSKYTRSKVRKSLPAEFSYIIQELLHETSVEPNKHAYINVIISTIISTKRADDFIIAMCNLIQRLTIDSLHIVGDIYDRGPGAHIIMDTLCNYHNFDIQWGNHDILWMGAASGNDSCIANVIRMSMRYGNLGTLEDGYGINLLPLATFAMDTYADDPCTIFMPKMNFADTNYNEKTLRLITQMHKAITIIQFKLEAEIIDRRPEFGMSNRKLLEKIDFERGVFVYEGKEYALRDTNFPTVDPADPYRLTDEERELVEKIHYSFMNSEKLKKHMRCLFTYGGMYLVSNSNLLYHASVPLNEDGSFKHVKIRGKEYWGRKLLDKADQLIRTAYFDEEGEDDKEFAMDYIWYMWCGPEAPLFDKDKMATFERYFLEDKEIQKEKKGYYYTLRNREDICDQILDEFGALGPHSHIINGHVPVKTIQGEQPMKANGKLFVIDGGFSKAYQPETGIAGYTLVYHSHGMQLVQHEPFQSRQKAIEEGLDIKSTNFVLEFNSQRMMVKDTDKGKELVTQIQDLKKLLVAYRIGLIKEKV</sequence>
<gene>
    <name evidence="1" type="primary">fbp</name>
    <name type="ordered locus">BT_1228</name>
</gene>
<name>F16PC_BACTN</name>
<comment type="catalytic activity">
    <reaction evidence="1">
        <text>beta-D-fructose 1,6-bisphosphate + H2O = beta-D-fructose 6-phosphate + phosphate</text>
        <dbReference type="Rhea" id="RHEA:11064"/>
        <dbReference type="ChEBI" id="CHEBI:15377"/>
        <dbReference type="ChEBI" id="CHEBI:32966"/>
        <dbReference type="ChEBI" id="CHEBI:43474"/>
        <dbReference type="ChEBI" id="CHEBI:57634"/>
        <dbReference type="EC" id="3.1.3.11"/>
    </reaction>
</comment>
<comment type="cofactor">
    <cofactor evidence="1">
        <name>Mn(2+)</name>
        <dbReference type="ChEBI" id="CHEBI:29035"/>
    </cofactor>
</comment>
<comment type="pathway">
    <text evidence="1">Carbohydrate biosynthesis; gluconeogenesis.</text>
</comment>
<comment type="similarity">
    <text evidence="1">Belongs to the FBPase class 3 family.</text>
</comment>
<organism>
    <name type="scientific">Bacteroides thetaiotaomicron (strain ATCC 29148 / DSM 2079 / JCM 5827 / CCUG 10774 / NCTC 10582 / VPI-5482 / E50)</name>
    <dbReference type="NCBI Taxonomy" id="226186"/>
    <lineage>
        <taxon>Bacteria</taxon>
        <taxon>Pseudomonadati</taxon>
        <taxon>Bacteroidota</taxon>
        <taxon>Bacteroidia</taxon>
        <taxon>Bacteroidales</taxon>
        <taxon>Bacteroidaceae</taxon>
        <taxon>Bacteroides</taxon>
    </lineage>
</organism>
<keyword id="KW-0119">Carbohydrate metabolism</keyword>
<keyword id="KW-0378">Hydrolase</keyword>
<keyword id="KW-0464">Manganese</keyword>
<keyword id="KW-1185">Reference proteome</keyword>
<reference key="1">
    <citation type="journal article" date="2003" name="Science">
        <title>A genomic view of the human-Bacteroides thetaiotaomicron symbiosis.</title>
        <authorList>
            <person name="Xu J."/>
            <person name="Bjursell M.K."/>
            <person name="Himrod J."/>
            <person name="Deng S."/>
            <person name="Carmichael L.K."/>
            <person name="Chiang H.C."/>
            <person name="Hooper L.V."/>
            <person name="Gordon J.I."/>
        </authorList>
    </citation>
    <scope>NUCLEOTIDE SEQUENCE [LARGE SCALE GENOMIC DNA]</scope>
    <source>
        <strain>ATCC 29148 / DSM 2079 / JCM 5827 / CCUG 10774 / NCTC 10582 / VPI-5482 / E50</strain>
    </source>
</reference>
<feature type="chain" id="PRO_0000363075" description="Fructose-1,6-bisphosphatase class 3">
    <location>
        <begin position="1"/>
        <end position="664"/>
    </location>
</feature>
<protein>
    <recommendedName>
        <fullName evidence="1">Fructose-1,6-bisphosphatase class 3</fullName>
        <shortName evidence="1">FBPase class 3</shortName>
        <ecNumber evidence="1">3.1.3.11</ecNumber>
    </recommendedName>
    <alternativeName>
        <fullName evidence="1">D-fructose-1,6-bisphosphate 1-phosphohydrolase class 3</fullName>
    </alternativeName>
</protein>
<accession>Q8A8D9</accession>
<evidence type="ECO:0000255" key="1">
    <source>
        <dbReference type="HAMAP-Rule" id="MF_01854"/>
    </source>
</evidence>
<proteinExistence type="inferred from homology"/>
<dbReference type="EC" id="3.1.3.11" evidence="1"/>
<dbReference type="EMBL" id="AE015928">
    <property type="protein sequence ID" value="AAO76335.1"/>
    <property type="molecule type" value="Genomic_DNA"/>
</dbReference>
<dbReference type="RefSeq" id="NP_810141.1">
    <property type="nucleotide sequence ID" value="NC_004663.1"/>
</dbReference>
<dbReference type="RefSeq" id="WP_008763412.1">
    <property type="nucleotide sequence ID" value="NC_004663.1"/>
</dbReference>
<dbReference type="STRING" id="226186.BT_1228"/>
<dbReference type="PaxDb" id="226186-BT_1228"/>
<dbReference type="DNASU" id="1073730"/>
<dbReference type="EnsemblBacteria" id="AAO76335">
    <property type="protein sequence ID" value="AAO76335"/>
    <property type="gene ID" value="BT_1228"/>
</dbReference>
<dbReference type="GeneID" id="60927206"/>
<dbReference type="KEGG" id="bth:BT_1228"/>
<dbReference type="PATRIC" id="fig|226186.12.peg.1254"/>
<dbReference type="eggNOG" id="COG3855">
    <property type="taxonomic scope" value="Bacteria"/>
</dbReference>
<dbReference type="HOGENOM" id="CLU_028392_2_0_10"/>
<dbReference type="InParanoid" id="Q8A8D9"/>
<dbReference type="OrthoDB" id="9779903at2"/>
<dbReference type="UniPathway" id="UPA00138"/>
<dbReference type="Proteomes" id="UP000001414">
    <property type="component" value="Chromosome"/>
</dbReference>
<dbReference type="GO" id="GO:0042132">
    <property type="term" value="F:fructose 1,6-bisphosphate 1-phosphatase activity"/>
    <property type="evidence" value="ECO:0007669"/>
    <property type="project" value="UniProtKB-UniRule"/>
</dbReference>
<dbReference type="GO" id="GO:0006094">
    <property type="term" value="P:gluconeogenesis"/>
    <property type="evidence" value="ECO:0007669"/>
    <property type="project" value="UniProtKB-UniRule"/>
</dbReference>
<dbReference type="HAMAP" id="MF_01854">
    <property type="entry name" value="FBPase_class3"/>
    <property type="match status" value="1"/>
</dbReference>
<dbReference type="InterPro" id="IPR009164">
    <property type="entry name" value="FBPtase_class3"/>
</dbReference>
<dbReference type="InterPro" id="IPR029052">
    <property type="entry name" value="Metallo-depent_PP-like"/>
</dbReference>
<dbReference type="Pfam" id="PF06874">
    <property type="entry name" value="FBPase_2"/>
    <property type="match status" value="1"/>
</dbReference>
<dbReference type="PIRSF" id="PIRSF000906">
    <property type="entry name" value="FBPtase_Bacill"/>
    <property type="match status" value="1"/>
</dbReference>
<dbReference type="SUPFAM" id="SSF56300">
    <property type="entry name" value="Metallo-dependent phosphatases"/>
    <property type="match status" value="1"/>
</dbReference>